<comment type="function">
    <text evidence="1">Catalyzes a salvage reaction resulting in the formation of AMP, that is energically less costly than de novo synthesis.</text>
</comment>
<comment type="catalytic activity">
    <reaction evidence="1">
        <text>AMP + diphosphate = 5-phospho-alpha-D-ribose 1-diphosphate + adenine</text>
        <dbReference type="Rhea" id="RHEA:16609"/>
        <dbReference type="ChEBI" id="CHEBI:16708"/>
        <dbReference type="ChEBI" id="CHEBI:33019"/>
        <dbReference type="ChEBI" id="CHEBI:58017"/>
        <dbReference type="ChEBI" id="CHEBI:456215"/>
        <dbReference type="EC" id="2.4.2.7"/>
    </reaction>
</comment>
<comment type="pathway">
    <text evidence="1">Purine metabolism; AMP biosynthesis via salvage pathway; AMP from adenine: step 1/1.</text>
</comment>
<comment type="subunit">
    <text evidence="1">Homodimer.</text>
</comment>
<comment type="subcellular location">
    <subcellularLocation>
        <location evidence="1">Cytoplasm</location>
    </subcellularLocation>
</comment>
<comment type="similarity">
    <text evidence="1">Belongs to the purine/pyrimidine phosphoribosyltransferase family.</text>
</comment>
<name>APT_SHEHH</name>
<protein>
    <recommendedName>
        <fullName evidence="1">Adenine phosphoribosyltransferase</fullName>
        <shortName evidence="1">APRT</shortName>
        <ecNumber evidence="1">2.4.2.7</ecNumber>
    </recommendedName>
</protein>
<sequence>MVMNTDSLALIKNSIKTIPNYPKEGILFRDVTSLLEDPQAYKLTIGLLVEHYKDQGFTKVVGTEARGFLFGAPLALELGIGFVPVRKPGKLPRETISESYELEYGHDVLEIHVDAINAEDKVLVIDDLLATGGTIEATVKLIRQLGGSVNDAAFVISLPDLGGEQRLEKMDLKLVSLCEFEGE</sequence>
<dbReference type="EC" id="2.4.2.7" evidence="1"/>
<dbReference type="EMBL" id="CP000931">
    <property type="protein sequence ID" value="ABZ76155.1"/>
    <property type="molecule type" value="Genomic_DNA"/>
</dbReference>
<dbReference type="RefSeq" id="WP_012276693.1">
    <property type="nucleotide sequence ID" value="NC_010334.1"/>
</dbReference>
<dbReference type="SMR" id="B0TNZ8"/>
<dbReference type="STRING" id="458817.Shal_1589"/>
<dbReference type="KEGG" id="shl:Shal_1589"/>
<dbReference type="eggNOG" id="COG0503">
    <property type="taxonomic scope" value="Bacteria"/>
</dbReference>
<dbReference type="HOGENOM" id="CLU_063339_3_0_6"/>
<dbReference type="OrthoDB" id="9803963at2"/>
<dbReference type="UniPathway" id="UPA00588">
    <property type="reaction ID" value="UER00646"/>
</dbReference>
<dbReference type="Proteomes" id="UP000001317">
    <property type="component" value="Chromosome"/>
</dbReference>
<dbReference type="GO" id="GO:0005737">
    <property type="term" value="C:cytoplasm"/>
    <property type="evidence" value="ECO:0007669"/>
    <property type="project" value="UniProtKB-SubCell"/>
</dbReference>
<dbReference type="GO" id="GO:0002055">
    <property type="term" value="F:adenine binding"/>
    <property type="evidence" value="ECO:0007669"/>
    <property type="project" value="TreeGrafter"/>
</dbReference>
<dbReference type="GO" id="GO:0003999">
    <property type="term" value="F:adenine phosphoribosyltransferase activity"/>
    <property type="evidence" value="ECO:0007669"/>
    <property type="project" value="UniProtKB-UniRule"/>
</dbReference>
<dbReference type="GO" id="GO:0016208">
    <property type="term" value="F:AMP binding"/>
    <property type="evidence" value="ECO:0007669"/>
    <property type="project" value="TreeGrafter"/>
</dbReference>
<dbReference type="GO" id="GO:0006168">
    <property type="term" value="P:adenine salvage"/>
    <property type="evidence" value="ECO:0007669"/>
    <property type="project" value="InterPro"/>
</dbReference>
<dbReference type="GO" id="GO:0044209">
    <property type="term" value="P:AMP salvage"/>
    <property type="evidence" value="ECO:0007669"/>
    <property type="project" value="UniProtKB-UniRule"/>
</dbReference>
<dbReference type="GO" id="GO:0006166">
    <property type="term" value="P:purine ribonucleoside salvage"/>
    <property type="evidence" value="ECO:0007669"/>
    <property type="project" value="UniProtKB-KW"/>
</dbReference>
<dbReference type="CDD" id="cd06223">
    <property type="entry name" value="PRTases_typeI"/>
    <property type="match status" value="1"/>
</dbReference>
<dbReference type="FunFam" id="3.40.50.2020:FF:000004">
    <property type="entry name" value="Adenine phosphoribosyltransferase"/>
    <property type="match status" value="1"/>
</dbReference>
<dbReference type="Gene3D" id="3.40.50.2020">
    <property type="match status" value="1"/>
</dbReference>
<dbReference type="HAMAP" id="MF_00004">
    <property type="entry name" value="Aden_phosphoribosyltr"/>
    <property type="match status" value="1"/>
</dbReference>
<dbReference type="InterPro" id="IPR005764">
    <property type="entry name" value="Ade_phspho_trans"/>
</dbReference>
<dbReference type="InterPro" id="IPR000836">
    <property type="entry name" value="PRibTrfase_dom"/>
</dbReference>
<dbReference type="InterPro" id="IPR029057">
    <property type="entry name" value="PRTase-like"/>
</dbReference>
<dbReference type="InterPro" id="IPR050054">
    <property type="entry name" value="UPRTase/APRTase"/>
</dbReference>
<dbReference type="NCBIfam" id="TIGR01090">
    <property type="entry name" value="apt"/>
    <property type="match status" value="1"/>
</dbReference>
<dbReference type="NCBIfam" id="NF002632">
    <property type="entry name" value="PRK02304.1-1"/>
    <property type="match status" value="1"/>
</dbReference>
<dbReference type="NCBIfam" id="NF002634">
    <property type="entry name" value="PRK02304.1-3"/>
    <property type="match status" value="1"/>
</dbReference>
<dbReference type="NCBIfam" id="NF002636">
    <property type="entry name" value="PRK02304.1-5"/>
    <property type="match status" value="1"/>
</dbReference>
<dbReference type="PANTHER" id="PTHR32315">
    <property type="entry name" value="ADENINE PHOSPHORIBOSYLTRANSFERASE"/>
    <property type="match status" value="1"/>
</dbReference>
<dbReference type="PANTHER" id="PTHR32315:SF3">
    <property type="entry name" value="ADENINE PHOSPHORIBOSYLTRANSFERASE"/>
    <property type="match status" value="1"/>
</dbReference>
<dbReference type="Pfam" id="PF00156">
    <property type="entry name" value="Pribosyltran"/>
    <property type="match status" value="1"/>
</dbReference>
<dbReference type="SUPFAM" id="SSF53271">
    <property type="entry name" value="PRTase-like"/>
    <property type="match status" value="1"/>
</dbReference>
<dbReference type="PROSITE" id="PS00103">
    <property type="entry name" value="PUR_PYR_PR_TRANSFER"/>
    <property type="match status" value="1"/>
</dbReference>
<keyword id="KW-0963">Cytoplasm</keyword>
<keyword id="KW-0328">Glycosyltransferase</keyword>
<keyword id="KW-0660">Purine salvage</keyword>
<keyword id="KW-0808">Transferase</keyword>
<evidence type="ECO:0000255" key="1">
    <source>
        <dbReference type="HAMAP-Rule" id="MF_00004"/>
    </source>
</evidence>
<proteinExistence type="inferred from homology"/>
<organism>
    <name type="scientific">Shewanella halifaxensis (strain HAW-EB4)</name>
    <dbReference type="NCBI Taxonomy" id="458817"/>
    <lineage>
        <taxon>Bacteria</taxon>
        <taxon>Pseudomonadati</taxon>
        <taxon>Pseudomonadota</taxon>
        <taxon>Gammaproteobacteria</taxon>
        <taxon>Alteromonadales</taxon>
        <taxon>Shewanellaceae</taxon>
        <taxon>Shewanella</taxon>
    </lineage>
</organism>
<reference key="1">
    <citation type="submission" date="2008-01" db="EMBL/GenBank/DDBJ databases">
        <title>Complete sequence of Shewanella halifaxensis HAW-EB4.</title>
        <authorList>
            <consortium name="US DOE Joint Genome Institute"/>
            <person name="Copeland A."/>
            <person name="Lucas S."/>
            <person name="Lapidus A."/>
            <person name="Glavina del Rio T."/>
            <person name="Dalin E."/>
            <person name="Tice H."/>
            <person name="Bruce D."/>
            <person name="Goodwin L."/>
            <person name="Pitluck S."/>
            <person name="Sims D."/>
            <person name="Brettin T."/>
            <person name="Detter J.C."/>
            <person name="Han C."/>
            <person name="Kuske C.R."/>
            <person name="Schmutz J."/>
            <person name="Larimer F."/>
            <person name="Land M."/>
            <person name="Hauser L."/>
            <person name="Kyrpides N."/>
            <person name="Kim E."/>
            <person name="Zhao J.-S."/>
            <person name="Richardson P."/>
        </authorList>
    </citation>
    <scope>NUCLEOTIDE SEQUENCE [LARGE SCALE GENOMIC DNA]</scope>
    <source>
        <strain>HAW-EB4</strain>
    </source>
</reference>
<accession>B0TNZ8</accession>
<feature type="chain" id="PRO_0000334717" description="Adenine phosphoribosyltransferase">
    <location>
        <begin position="1"/>
        <end position="183"/>
    </location>
</feature>
<gene>
    <name evidence="1" type="primary">apt</name>
    <name type="ordered locus">Shal_1589</name>
</gene>